<sequence>MSAQKMTNEQILKYVQSKQIRKDIPEFRSGDTIIVHNKIIENNKSRIQKFEGVVIRRRGSGLSETIIVRKESSGIGVERIFQLHSPQIEKIEVIRLGKVRRAYLTYLRERSGKSARIKERRPAKAVEKTSKPASAKKPAAKANKK</sequence>
<evidence type="ECO:0000255" key="1">
    <source>
        <dbReference type="HAMAP-Rule" id="MF_00402"/>
    </source>
</evidence>
<evidence type="ECO:0000256" key="2">
    <source>
        <dbReference type="SAM" id="MobiDB-lite"/>
    </source>
</evidence>
<evidence type="ECO:0000305" key="3"/>
<accession>Q8EWU9</accession>
<reference key="1">
    <citation type="journal article" date="2002" name="Nucleic Acids Res.">
        <title>The complete genomic sequence of Mycoplasma penetrans, an intracellular bacterial pathogen in humans.</title>
        <authorList>
            <person name="Sasaki Y."/>
            <person name="Ishikawa J."/>
            <person name="Yamashita A."/>
            <person name="Oshima K."/>
            <person name="Kenri T."/>
            <person name="Furuya K."/>
            <person name="Yoshino C."/>
            <person name="Horino A."/>
            <person name="Shiba T."/>
            <person name="Sasaki T."/>
            <person name="Hattori M."/>
        </authorList>
    </citation>
    <scope>NUCLEOTIDE SEQUENCE [LARGE SCALE GENOMIC DNA]</scope>
    <source>
        <strain>HF-2</strain>
    </source>
</reference>
<feature type="chain" id="PRO_0000163491" description="Large ribosomal subunit protein bL19">
    <location>
        <begin position="1"/>
        <end position="145"/>
    </location>
</feature>
<feature type="region of interest" description="Disordered" evidence="2">
    <location>
        <begin position="112"/>
        <end position="145"/>
    </location>
</feature>
<feature type="compositionally biased region" description="Basic and acidic residues" evidence="2">
    <location>
        <begin position="112"/>
        <end position="130"/>
    </location>
</feature>
<comment type="function">
    <text evidence="1">This protein is located at the 30S-50S ribosomal subunit interface and may play a role in the structure and function of the aminoacyl-tRNA binding site.</text>
</comment>
<comment type="similarity">
    <text evidence="1">Belongs to the bacterial ribosomal protein bL19 family.</text>
</comment>
<dbReference type="EMBL" id="BA000026">
    <property type="protein sequence ID" value="BAC43894.1"/>
    <property type="molecule type" value="Genomic_DNA"/>
</dbReference>
<dbReference type="RefSeq" id="WP_011076930.1">
    <property type="nucleotide sequence ID" value="NC_004432.1"/>
</dbReference>
<dbReference type="SMR" id="Q8EWU9"/>
<dbReference type="FunCoup" id="Q8EWU9">
    <property type="interactions" value="213"/>
</dbReference>
<dbReference type="STRING" id="272633.gene:10731195"/>
<dbReference type="KEGG" id="mpe:MYPE1030"/>
<dbReference type="eggNOG" id="COG0335">
    <property type="taxonomic scope" value="Bacteria"/>
</dbReference>
<dbReference type="HOGENOM" id="CLU_103507_2_2_14"/>
<dbReference type="InParanoid" id="Q8EWU9"/>
<dbReference type="Proteomes" id="UP000002522">
    <property type="component" value="Chromosome"/>
</dbReference>
<dbReference type="GO" id="GO:0022625">
    <property type="term" value="C:cytosolic large ribosomal subunit"/>
    <property type="evidence" value="ECO:0007669"/>
    <property type="project" value="TreeGrafter"/>
</dbReference>
<dbReference type="GO" id="GO:0003735">
    <property type="term" value="F:structural constituent of ribosome"/>
    <property type="evidence" value="ECO:0007669"/>
    <property type="project" value="InterPro"/>
</dbReference>
<dbReference type="GO" id="GO:0006412">
    <property type="term" value="P:translation"/>
    <property type="evidence" value="ECO:0007669"/>
    <property type="project" value="UniProtKB-UniRule"/>
</dbReference>
<dbReference type="FunFam" id="2.30.30.790:FF:000001">
    <property type="entry name" value="50S ribosomal protein L19"/>
    <property type="match status" value="1"/>
</dbReference>
<dbReference type="Gene3D" id="2.30.30.790">
    <property type="match status" value="1"/>
</dbReference>
<dbReference type="HAMAP" id="MF_00402">
    <property type="entry name" value="Ribosomal_bL19"/>
    <property type="match status" value="1"/>
</dbReference>
<dbReference type="InterPro" id="IPR001857">
    <property type="entry name" value="Ribosomal_bL19"/>
</dbReference>
<dbReference type="InterPro" id="IPR018257">
    <property type="entry name" value="Ribosomal_bL19_CS"/>
</dbReference>
<dbReference type="InterPro" id="IPR038657">
    <property type="entry name" value="Ribosomal_bL19_sf"/>
</dbReference>
<dbReference type="InterPro" id="IPR008991">
    <property type="entry name" value="Translation_prot_SH3-like_sf"/>
</dbReference>
<dbReference type="NCBIfam" id="TIGR01024">
    <property type="entry name" value="rplS_bact"/>
    <property type="match status" value="1"/>
</dbReference>
<dbReference type="PANTHER" id="PTHR15680:SF9">
    <property type="entry name" value="LARGE RIBOSOMAL SUBUNIT PROTEIN BL19M"/>
    <property type="match status" value="1"/>
</dbReference>
<dbReference type="PANTHER" id="PTHR15680">
    <property type="entry name" value="RIBOSOMAL PROTEIN L19"/>
    <property type="match status" value="1"/>
</dbReference>
<dbReference type="Pfam" id="PF01245">
    <property type="entry name" value="Ribosomal_L19"/>
    <property type="match status" value="1"/>
</dbReference>
<dbReference type="PIRSF" id="PIRSF002191">
    <property type="entry name" value="Ribosomal_L19"/>
    <property type="match status" value="1"/>
</dbReference>
<dbReference type="PRINTS" id="PR00061">
    <property type="entry name" value="RIBOSOMALL19"/>
</dbReference>
<dbReference type="SUPFAM" id="SSF50104">
    <property type="entry name" value="Translation proteins SH3-like domain"/>
    <property type="match status" value="1"/>
</dbReference>
<dbReference type="PROSITE" id="PS01015">
    <property type="entry name" value="RIBOSOMAL_L19"/>
    <property type="match status" value="1"/>
</dbReference>
<gene>
    <name evidence="1" type="primary">rplS</name>
    <name type="ordered locus">MYPE1030</name>
</gene>
<protein>
    <recommendedName>
        <fullName evidence="1">Large ribosomal subunit protein bL19</fullName>
    </recommendedName>
    <alternativeName>
        <fullName evidence="3">50S ribosomal protein L19</fullName>
    </alternativeName>
</protein>
<name>RL19_MALP2</name>
<keyword id="KW-1185">Reference proteome</keyword>
<keyword id="KW-0687">Ribonucleoprotein</keyword>
<keyword id="KW-0689">Ribosomal protein</keyword>
<organism>
    <name type="scientific">Malacoplasma penetrans (strain HF-2)</name>
    <name type="common">Mycoplasma penetrans</name>
    <dbReference type="NCBI Taxonomy" id="272633"/>
    <lineage>
        <taxon>Bacteria</taxon>
        <taxon>Bacillati</taxon>
        <taxon>Mycoplasmatota</taxon>
        <taxon>Mycoplasmoidales</taxon>
        <taxon>Mycoplasmoidaceae</taxon>
        <taxon>Malacoplasma</taxon>
    </lineage>
</organism>
<proteinExistence type="inferred from homology"/>